<geneLocation type="mitochondrion"/>
<sequence>MLKIIIPTMMLMPLTWMSKPNMIWINTTAYSLLISLISLSFLNQLGDNCMSLSLLFFTDSLSAPLLALTTWLLPLMLMASQFHLSKEPLTRKKLYITMLILLQLFLIMTFTATELIMFYILFEATLVPTLIIITRWGNQTERLNAGTYFLFYTLVGSLPLLVALLFIQNNMGTLNFLMIQLWAQPLPSSWSNTLLWLACMMAFMVKMPLYGLHLWLPKAHVEAPIAGSMVLAAVLLKLGGYGMMRITVLLSPLTNFMAYPFMMLSLWGMIMTSSICLRQTDLKSLIAYSSVSHMALVIMAILIQTPWSYMGATALMIAHGLTSSMLFCLANSNYERTHSRTMILARGLQVLLPLMAAWWLLASLTNLALPPTINLIGELFVVMASFSWSNITIILMGTNIIITALYSLYMLTTTQRGKYTYHIKNIKPSFTRENALMTLHLMPLLLLSLNPKIILGPIY</sequence>
<evidence type="ECO:0000250" key="1">
    <source>
        <dbReference type="UniProtKB" id="P03905"/>
    </source>
</evidence>
<evidence type="ECO:0000250" key="2">
    <source>
        <dbReference type="UniProtKB" id="P03910"/>
    </source>
</evidence>
<evidence type="ECO:0000255" key="3"/>
<evidence type="ECO:0000305" key="4"/>
<dbReference type="EC" id="7.1.1.2" evidence="1"/>
<dbReference type="EMBL" id="X63726">
    <property type="protein sequence ID" value="CAA45266.1"/>
    <property type="molecule type" value="Genomic_DNA"/>
</dbReference>
<dbReference type="PIR" id="S26160">
    <property type="entry name" value="S26160"/>
</dbReference>
<dbReference type="RefSeq" id="NP_006937.1">
    <property type="nucleotide sequence ID" value="NC_001325.1"/>
</dbReference>
<dbReference type="SMR" id="Q00506"/>
<dbReference type="GeneID" id="807655"/>
<dbReference type="CTD" id="4538"/>
<dbReference type="OrthoDB" id="26615at33554"/>
<dbReference type="GO" id="GO:0005743">
    <property type="term" value="C:mitochondrial inner membrane"/>
    <property type="evidence" value="ECO:0000250"/>
    <property type="project" value="UniProtKB"/>
</dbReference>
<dbReference type="GO" id="GO:0008137">
    <property type="term" value="F:NADH dehydrogenase (ubiquinone) activity"/>
    <property type="evidence" value="ECO:0000250"/>
    <property type="project" value="UniProtKB"/>
</dbReference>
<dbReference type="GO" id="GO:0048039">
    <property type="term" value="F:ubiquinone binding"/>
    <property type="evidence" value="ECO:0007669"/>
    <property type="project" value="TreeGrafter"/>
</dbReference>
<dbReference type="GO" id="GO:0015990">
    <property type="term" value="P:electron transport coupled proton transport"/>
    <property type="evidence" value="ECO:0007669"/>
    <property type="project" value="TreeGrafter"/>
</dbReference>
<dbReference type="GO" id="GO:0006120">
    <property type="term" value="P:mitochondrial electron transport, NADH to ubiquinone"/>
    <property type="evidence" value="ECO:0000250"/>
    <property type="project" value="UniProtKB"/>
</dbReference>
<dbReference type="GO" id="GO:0032981">
    <property type="term" value="P:mitochondrial respiratory chain complex I assembly"/>
    <property type="evidence" value="ECO:0000250"/>
    <property type="project" value="UniProtKB"/>
</dbReference>
<dbReference type="InterPro" id="IPR000260">
    <property type="entry name" value="NADH4_N"/>
</dbReference>
<dbReference type="InterPro" id="IPR010227">
    <property type="entry name" value="NADH_Q_OxRdtase_chainM/4"/>
</dbReference>
<dbReference type="InterPro" id="IPR003918">
    <property type="entry name" value="NADH_UbQ_OxRdtase"/>
</dbReference>
<dbReference type="InterPro" id="IPR001750">
    <property type="entry name" value="ND/Mrp_TM"/>
</dbReference>
<dbReference type="NCBIfam" id="TIGR01972">
    <property type="entry name" value="NDH_I_M"/>
    <property type="match status" value="1"/>
</dbReference>
<dbReference type="PANTHER" id="PTHR43507">
    <property type="entry name" value="NADH-UBIQUINONE OXIDOREDUCTASE CHAIN 4"/>
    <property type="match status" value="1"/>
</dbReference>
<dbReference type="PANTHER" id="PTHR43507:SF20">
    <property type="entry name" value="NADH-UBIQUINONE OXIDOREDUCTASE CHAIN 4"/>
    <property type="match status" value="1"/>
</dbReference>
<dbReference type="Pfam" id="PF01059">
    <property type="entry name" value="Oxidored_q5_N"/>
    <property type="match status" value="1"/>
</dbReference>
<dbReference type="Pfam" id="PF00361">
    <property type="entry name" value="Proton_antipo_M"/>
    <property type="match status" value="1"/>
</dbReference>
<dbReference type="PRINTS" id="PR01437">
    <property type="entry name" value="NUOXDRDTASE4"/>
</dbReference>
<keyword id="KW-0249">Electron transport</keyword>
<keyword id="KW-0472">Membrane</keyword>
<keyword id="KW-0496">Mitochondrion</keyword>
<keyword id="KW-0999">Mitochondrion inner membrane</keyword>
<keyword id="KW-0520">NAD</keyword>
<keyword id="KW-0679">Respiratory chain</keyword>
<keyword id="KW-1278">Translocase</keyword>
<keyword id="KW-0812">Transmembrane</keyword>
<keyword id="KW-1133">Transmembrane helix</keyword>
<keyword id="KW-0813">Transport</keyword>
<keyword id="KW-0830">Ubiquinone</keyword>
<reference key="1">
    <citation type="journal article" date="1992" name="J. Mol. Evol.">
        <title>The complete mitochondrial DNA sequence of the harbor seal, Phoca vitulina.</title>
        <authorList>
            <person name="Arnason U."/>
            <person name="Johnsson E."/>
        </authorList>
    </citation>
    <scope>NUCLEOTIDE SEQUENCE [GENOMIC DNA]</scope>
</reference>
<accession>Q00506</accession>
<protein>
    <recommendedName>
        <fullName>NADH-ubiquinone oxidoreductase chain 4</fullName>
        <ecNumber evidence="1">7.1.1.2</ecNumber>
    </recommendedName>
    <alternativeName>
        <fullName>NADH dehydrogenase subunit 4</fullName>
    </alternativeName>
</protein>
<organism>
    <name type="scientific">Phoca vitulina</name>
    <name type="common">Harbor seal</name>
    <dbReference type="NCBI Taxonomy" id="9720"/>
    <lineage>
        <taxon>Eukaryota</taxon>
        <taxon>Metazoa</taxon>
        <taxon>Chordata</taxon>
        <taxon>Craniata</taxon>
        <taxon>Vertebrata</taxon>
        <taxon>Euteleostomi</taxon>
        <taxon>Mammalia</taxon>
        <taxon>Eutheria</taxon>
        <taxon>Laurasiatheria</taxon>
        <taxon>Carnivora</taxon>
        <taxon>Caniformia</taxon>
        <taxon>Pinnipedia</taxon>
        <taxon>Phocidae</taxon>
        <taxon>Phocinae</taxon>
        <taxon>Phoca</taxon>
    </lineage>
</organism>
<comment type="function">
    <text evidence="1">Core subunit of the mitochondrial membrane respiratory chain NADH dehydrogenase (Complex I) which catalyzes electron transfer from NADH through the respiratory chain, using ubiquinone as an electron acceptor. Essential for the catalytic activity and assembly of complex I.</text>
</comment>
<comment type="catalytic activity">
    <reaction evidence="1">
        <text>a ubiquinone + NADH + 5 H(+)(in) = a ubiquinol + NAD(+) + 4 H(+)(out)</text>
        <dbReference type="Rhea" id="RHEA:29091"/>
        <dbReference type="Rhea" id="RHEA-COMP:9565"/>
        <dbReference type="Rhea" id="RHEA-COMP:9566"/>
        <dbReference type="ChEBI" id="CHEBI:15378"/>
        <dbReference type="ChEBI" id="CHEBI:16389"/>
        <dbReference type="ChEBI" id="CHEBI:17976"/>
        <dbReference type="ChEBI" id="CHEBI:57540"/>
        <dbReference type="ChEBI" id="CHEBI:57945"/>
        <dbReference type="EC" id="7.1.1.2"/>
    </reaction>
</comment>
<comment type="subunit">
    <text evidence="2">Core subunit of respiratory chain NADH dehydrogenase (Complex I) which is composed of 45 different subunits.</text>
</comment>
<comment type="subcellular location">
    <subcellularLocation>
        <location evidence="2">Mitochondrion inner membrane</location>
        <topology evidence="3">Multi-pass membrane protein</topology>
    </subcellularLocation>
</comment>
<comment type="similarity">
    <text evidence="4">Belongs to the complex I subunit 4 family.</text>
</comment>
<name>NU4M_PHOVI</name>
<proteinExistence type="inferred from homology"/>
<feature type="chain" id="PRO_0000117969" description="NADH-ubiquinone oxidoreductase chain 4">
    <location>
        <begin position="1"/>
        <end position="459"/>
    </location>
</feature>
<feature type="transmembrane region" description="Helical" evidence="3">
    <location>
        <begin position="22"/>
        <end position="42"/>
    </location>
</feature>
<feature type="transmembrane region" description="Helical" evidence="3">
    <location>
        <begin position="60"/>
        <end position="80"/>
    </location>
</feature>
<feature type="transmembrane region" description="Helical" evidence="3">
    <location>
        <begin position="98"/>
        <end position="118"/>
    </location>
</feature>
<feature type="transmembrane region" description="Helical" evidence="3">
    <location>
        <begin position="147"/>
        <end position="167"/>
    </location>
</feature>
<feature type="transmembrane region" description="Helical" evidence="3">
    <location>
        <begin position="194"/>
        <end position="214"/>
    </location>
</feature>
<feature type="transmembrane region" description="Helical" evidence="3">
    <location>
        <begin position="224"/>
        <end position="244"/>
    </location>
</feature>
<feature type="transmembrane region" description="Helical" evidence="3">
    <location>
        <begin position="256"/>
        <end position="276"/>
    </location>
</feature>
<feature type="transmembrane region" description="Helical" evidence="3">
    <location>
        <begin position="284"/>
        <end position="303"/>
    </location>
</feature>
<feature type="transmembrane region" description="Helical" evidence="3">
    <location>
        <begin position="308"/>
        <end position="330"/>
    </location>
</feature>
<feature type="transmembrane region" description="Helical" evidence="3">
    <location>
        <begin position="350"/>
        <end position="370"/>
    </location>
</feature>
<feature type="transmembrane region" description="Helical" evidence="3">
    <location>
        <begin position="391"/>
        <end position="411"/>
    </location>
</feature>
<gene>
    <name type="primary">MT-ND4</name>
    <name type="synonym">MTND4</name>
    <name type="synonym">NADH4</name>
    <name type="synonym">ND4</name>
</gene>